<keyword id="KW-0472">Membrane</keyword>
<keyword id="KW-0812">Transmembrane</keyword>
<keyword id="KW-1133">Transmembrane helix</keyword>
<organism>
    <name type="scientific">Saccharomyces cerevisiae (strain ATCC 204508 / S288c)</name>
    <name type="common">Baker's yeast</name>
    <dbReference type="NCBI Taxonomy" id="559292"/>
    <lineage>
        <taxon>Eukaryota</taxon>
        <taxon>Fungi</taxon>
        <taxon>Dikarya</taxon>
        <taxon>Ascomycota</taxon>
        <taxon>Saccharomycotina</taxon>
        <taxon>Saccharomycetes</taxon>
        <taxon>Saccharomycetales</taxon>
        <taxon>Saccharomycetaceae</taxon>
        <taxon>Saccharomyces</taxon>
    </lineage>
</organism>
<name>YD406_YEAST</name>
<protein>
    <recommendedName>
        <fullName>Putative uncharacterized protein YDR406W-A</fullName>
    </recommendedName>
</protein>
<feature type="chain" id="PRO_0000309020" description="Putative uncharacterized protein YDR406W-A">
    <location>
        <begin position="1"/>
        <end position="81"/>
    </location>
</feature>
<feature type="transmembrane region" description="Helical" evidence="1">
    <location>
        <begin position="1"/>
        <end position="21"/>
    </location>
</feature>
<feature type="transmembrane region" description="Helical" evidence="1">
    <location>
        <begin position="27"/>
        <end position="47"/>
    </location>
</feature>
<comment type="subcellular location">
    <subcellularLocation>
        <location evidence="2">Membrane</location>
        <topology evidence="2">Multi-pass membrane protein</topology>
    </subcellularLocation>
</comment>
<comment type="caution">
    <text evidence="3">Product of a dubious gene prediction unlikely to encode a functional protein. Because of that it is not part of the S.cerevisiae S288c complete/reference proteome set.</text>
</comment>
<gene>
    <name type="ordered locus">YDR406W-A</name>
    <name type="ORF">smORF144</name>
</gene>
<reference key="1">
    <citation type="journal article" date="1997" name="Nature">
        <title>The nucleotide sequence of Saccharomyces cerevisiae chromosome IV.</title>
        <authorList>
            <person name="Jacq C."/>
            <person name="Alt-Moerbe J."/>
            <person name="Andre B."/>
            <person name="Arnold W."/>
            <person name="Bahr A."/>
            <person name="Ballesta J.P.G."/>
            <person name="Bargues M."/>
            <person name="Baron L."/>
            <person name="Becker A."/>
            <person name="Biteau N."/>
            <person name="Bloecker H."/>
            <person name="Blugeon C."/>
            <person name="Boskovic J."/>
            <person name="Brandt P."/>
            <person name="Brueckner M."/>
            <person name="Buitrago M.J."/>
            <person name="Coster F."/>
            <person name="Delaveau T."/>
            <person name="del Rey F."/>
            <person name="Dujon B."/>
            <person name="Eide L.G."/>
            <person name="Garcia-Cantalejo J.M."/>
            <person name="Goffeau A."/>
            <person name="Gomez-Peris A."/>
            <person name="Granotier C."/>
            <person name="Hanemann V."/>
            <person name="Hankeln T."/>
            <person name="Hoheisel J.D."/>
            <person name="Jaeger W."/>
            <person name="Jimenez A."/>
            <person name="Jonniaux J.-L."/>
            <person name="Kraemer C."/>
            <person name="Kuester H."/>
            <person name="Laamanen P."/>
            <person name="Legros Y."/>
            <person name="Louis E.J."/>
            <person name="Moeller-Rieker S."/>
            <person name="Monnet A."/>
            <person name="Moro M."/>
            <person name="Mueller-Auer S."/>
            <person name="Nussbaumer B."/>
            <person name="Paricio N."/>
            <person name="Paulin L."/>
            <person name="Perea J."/>
            <person name="Perez-Alonso M."/>
            <person name="Perez-Ortin J.E."/>
            <person name="Pohl T.M."/>
            <person name="Prydz H."/>
            <person name="Purnelle B."/>
            <person name="Rasmussen S.W."/>
            <person name="Remacha M.A."/>
            <person name="Revuelta J.L."/>
            <person name="Rieger M."/>
            <person name="Salom D."/>
            <person name="Saluz H.P."/>
            <person name="Saiz J.E."/>
            <person name="Saren A.-M."/>
            <person name="Schaefer M."/>
            <person name="Scharfe M."/>
            <person name="Schmidt E.R."/>
            <person name="Schneider C."/>
            <person name="Scholler P."/>
            <person name="Schwarz S."/>
            <person name="Soler-Mira A."/>
            <person name="Urrestarazu L.A."/>
            <person name="Verhasselt P."/>
            <person name="Vissers S."/>
            <person name="Voet M."/>
            <person name="Volckaert G."/>
            <person name="Wagner G."/>
            <person name="Wambutt R."/>
            <person name="Wedler E."/>
            <person name="Wedler H."/>
            <person name="Woelfl S."/>
            <person name="Harris D.E."/>
            <person name="Bowman S."/>
            <person name="Brown D."/>
            <person name="Churcher C.M."/>
            <person name="Connor R."/>
            <person name="Dedman K."/>
            <person name="Gentles S."/>
            <person name="Hamlin N."/>
            <person name="Hunt S."/>
            <person name="Jones L."/>
            <person name="McDonald S."/>
            <person name="Murphy L.D."/>
            <person name="Niblett D."/>
            <person name="Odell C."/>
            <person name="Oliver K."/>
            <person name="Rajandream M.A."/>
            <person name="Richards C."/>
            <person name="Shore L."/>
            <person name="Walsh S.V."/>
            <person name="Barrell B.G."/>
            <person name="Dietrich F.S."/>
            <person name="Mulligan J.T."/>
            <person name="Allen E."/>
            <person name="Araujo R."/>
            <person name="Aviles E."/>
            <person name="Berno A."/>
            <person name="Carpenter J."/>
            <person name="Chen E."/>
            <person name="Cherry J.M."/>
            <person name="Chung E."/>
            <person name="Duncan M."/>
            <person name="Hunicke-Smith S."/>
            <person name="Hyman R.W."/>
            <person name="Komp C."/>
            <person name="Lashkari D."/>
            <person name="Lew H."/>
            <person name="Lin D."/>
            <person name="Mosedale D."/>
            <person name="Nakahara K."/>
            <person name="Namath A."/>
            <person name="Oefner P."/>
            <person name="Oh C."/>
            <person name="Petel F.X."/>
            <person name="Roberts D."/>
            <person name="Schramm S."/>
            <person name="Schroeder M."/>
            <person name="Shogren T."/>
            <person name="Shroff N."/>
            <person name="Winant A."/>
            <person name="Yelton M.A."/>
            <person name="Botstein D."/>
            <person name="Davis R.W."/>
            <person name="Johnston M."/>
            <person name="Andrews S."/>
            <person name="Brinkman R."/>
            <person name="Cooper J."/>
            <person name="Ding H."/>
            <person name="Du Z."/>
            <person name="Favello A."/>
            <person name="Fulton L."/>
            <person name="Gattung S."/>
            <person name="Greco T."/>
            <person name="Hallsworth K."/>
            <person name="Hawkins J."/>
            <person name="Hillier L.W."/>
            <person name="Jier M."/>
            <person name="Johnson D."/>
            <person name="Johnston L."/>
            <person name="Kirsten J."/>
            <person name="Kucaba T."/>
            <person name="Langston Y."/>
            <person name="Latreille P."/>
            <person name="Le T."/>
            <person name="Mardis E."/>
            <person name="Menezes S."/>
            <person name="Miller N."/>
            <person name="Nhan M."/>
            <person name="Pauley A."/>
            <person name="Peluso D."/>
            <person name="Rifkin L."/>
            <person name="Riles L."/>
            <person name="Taich A."/>
            <person name="Trevaskis E."/>
            <person name="Vignati D."/>
            <person name="Wilcox L."/>
            <person name="Wohldman P."/>
            <person name="Vaudin M."/>
            <person name="Wilson R."/>
            <person name="Waterston R."/>
            <person name="Albermann K."/>
            <person name="Hani J."/>
            <person name="Heumann K."/>
            <person name="Kleine K."/>
            <person name="Mewes H.-W."/>
            <person name="Zollner A."/>
            <person name="Zaccaria P."/>
        </authorList>
    </citation>
    <scope>NUCLEOTIDE SEQUENCE [LARGE SCALE GENOMIC DNA]</scope>
    <source>
        <strain>ATCC 204508 / S288c</strain>
    </source>
</reference>
<reference key="2">
    <citation type="journal article" date="2014" name="G3 (Bethesda)">
        <title>The reference genome sequence of Saccharomyces cerevisiae: Then and now.</title>
        <authorList>
            <person name="Engel S.R."/>
            <person name="Dietrich F.S."/>
            <person name="Fisk D.G."/>
            <person name="Binkley G."/>
            <person name="Balakrishnan R."/>
            <person name="Costanzo M.C."/>
            <person name="Dwight S.S."/>
            <person name="Hitz B.C."/>
            <person name="Karra K."/>
            <person name="Nash R.S."/>
            <person name="Weng S."/>
            <person name="Wong E.D."/>
            <person name="Lloyd P."/>
            <person name="Skrzypek M.S."/>
            <person name="Miyasato S.R."/>
            <person name="Simison M."/>
            <person name="Cherry J.M."/>
        </authorList>
    </citation>
    <scope>GENOME REANNOTATION</scope>
    <source>
        <strain>ATCC 204508 / S288c</strain>
    </source>
</reference>
<reference key="3">
    <citation type="journal article" date="2003" name="Genome Res.">
        <title>Systematic discovery of new genes in the Saccharomyces cerevisiae genome.</title>
        <authorList>
            <person name="Kessler M.M."/>
            <person name="Zeng Q."/>
            <person name="Hogan S."/>
            <person name="Cook R."/>
            <person name="Morales A.J."/>
            <person name="Cottarel G."/>
        </authorList>
    </citation>
    <scope>GENOME REANNOTATION</scope>
</reference>
<sequence>MTLFSFFLVILSFYYILFSLLGRNYLIFIYIKIIPTVSYFHFNHHFFKLKFRNAKHIIVYFSRKHNFQHQALFVLYYLYSI</sequence>
<evidence type="ECO:0000255" key="1"/>
<evidence type="ECO:0000305" key="2"/>
<evidence type="ECO:0000305" key="3">
    <source>
    </source>
</evidence>
<proteinExistence type="uncertain"/>
<accession>P0C5M2</accession>
<dbReference type="EMBL" id="U32274">
    <property type="status" value="NOT_ANNOTATED_CDS"/>
    <property type="molecule type" value="Genomic_DNA"/>
</dbReference>
<dbReference type="SMR" id="P0C5M2"/>
<dbReference type="STRING" id="4932.YDR406W-A"/>
<dbReference type="PaxDb" id="4932-YDR406W-A"/>
<dbReference type="EnsemblFungi" id="YDR406W-A_mRNA">
    <property type="protein sequence ID" value="YDR406W-A"/>
    <property type="gene ID" value="YDR406W-A"/>
</dbReference>
<dbReference type="AGR" id="SGD:S000028543"/>
<dbReference type="SGD" id="S000028543">
    <property type="gene designation" value="YDR406W-A"/>
</dbReference>
<dbReference type="HOGENOM" id="CLU_2575682_0_0_1"/>
<dbReference type="GO" id="GO:0016020">
    <property type="term" value="C:membrane"/>
    <property type="evidence" value="ECO:0007669"/>
    <property type="project" value="UniProtKB-SubCell"/>
</dbReference>